<sequence>MSGHSKWHNIQAKKGKADAKRGKVFTKIGKEIAVAVKTGGANLDANSKLRDCVAKAKAANMPMDTINRAIKKGAGELEGVNYEEIIYEGYGPAGVAMLVNVLTDNKNRSASDVRYCFDRNGGNLGASGCVAWMFQRKGQIVIEKNDSIDEDELMMKVLDFGAEDFASEEEVFIITTAQEEFSNVREALEKENFEFVSAELTMVPDNTVKLSLEDSERVQKLIDKLEDSDDVQDVYHNAEFDEAFEG</sequence>
<proteinExistence type="inferred from homology"/>
<feature type="chain" id="PRO_0000175788" description="Probable transcriptional regulatory protein CA_C2295">
    <location>
        <begin position="1"/>
        <end position="246"/>
    </location>
</feature>
<keyword id="KW-0963">Cytoplasm</keyword>
<keyword id="KW-0238">DNA-binding</keyword>
<keyword id="KW-1185">Reference proteome</keyword>
<keyword id="KW-0804">Transcription</keyword>
<keyword id="KW-0805">Transcription regulation</keyword>
<name>Y2295_CLOAB</name>
<gene>
    <name type="ordered locus">CA_C2295</name>
</gene>
<protein>
    <recommendedName>
        <fullName evidence="1">Probable transcriptional regulatory protein CA_C2295</fullName>
    </recommendedName>
</protein>
<dbReference type="EMBL" id="AE001437">
    <property type="protein sequence ID" value="AAK80251.1"/>
    <property type="molecule type" value="Genomic_DNA"/>
</dbReference>
<dbReference type="PIR" id="H97182">
    <property type="entry name" value="H97182"/>
</dbReference>
<dbReference type="RefSeq" id="NP_348911.1">
    <property type="nucleotide sequence ID" value="NC_003030.1"/>
</dbReference>
<dbReference type="RefSeq" id="WP_010965592.1">
    <property type="nucleotide sequence ID" value="NC_003030.1"/>
</dbReference>
<dbReference type="SMR" id="Q97GS1"/>
<dbReference type="STRING" id="272562.CA_C2295"/>
<dbReference type="KEGG" id="cac:CA_C2295"/>
<dbReference type="PATRIC" id="fig|272562.8.peg.2492"/>
<dbReference type="eggNOG" id="COG0217">
    <property type="taxonomic scope" value="Bacteria"/>
</dbReference>
<dbReference type="HOGENOM" id="CLU_062974_2_2_9"/>
<dbReference type="OrthoDB" id="9781053at2"/>
<dbReference type="Proteomes" id="UP000000814">
    <property type="component" value="Chromosome"/>
</dbReference>
<dbReference type="GO" id="GO:0005829">
    <property type="term" value="C:cytosol"/>
    <property type="evidence" value="ECO:0007669"/>
    <property type="project" value="TreeGrafter"/>
</dbReference>
<dbReference type="GO" id="GO:0003677">
    <property type="term" value="F:DNA binding"/>
    <property type="evidence" value="ECO:0007669"/>
    <property type="project" value="UniProtKB-UniRule"/>
</dbReference>
<dbReference type="GO" id="GO:0006355">
    <property type="term" value="P:regulation of DNA-templated transcription"/>
    <property type="evidence" value="ECO:0007669"/>
    <property type="project" value="UniProtKB-UniRule"/>
</dbReference>
<dbReference type="FunFam" id="1.10.10.200:FF:000002">
    <property type="entry name" value="Probable transcriptional regulatory protein CLM62_37755"/>
    <property type="match status" value="1"/>
</dbReference>
<dbReference type="FunFam" id="3.30.70.980:FF:000002">
    <property type="entry name" value="Probable transcriptional regulatory protein YebC"/>
    <property type="match status" value="1"/>
</dbReference>
<dbReference type="Gene3D" id="1.10.10.200">
    <property type="match status" value="1"/>
</dbReference>
<dbReference type="Gene3D" id="3.30.70.980">
    <property type="match status" value="2"/>
</dbReference>
<dbReference type="HAMAP" id="MF_00693">
    <property type="entry name" value="Transcrip_reg_TACO1"/>
    <property type="match status" value="1"/>
</dbReference>
<dbReference type="InterPro" id="IPR017856">
    <property type="entry name" value="Integrase-like_N"/>
</dbReference>
<dbReference type="InterPro" id="IPR048300">
    <property type="entry name" value="TACO1_YebC-like_2nd/3rd_dom"/>
</dbReference>
<dbReference type="InterPro" id="IPR049083">
    <property type="entry name" value="TACO1_YebC_N"/>
</dbReference>
<dbReference type="InterPro" id="IPR002876">
    <property type="entry name" value="Transcrip_reg_TACO1-like"/>
</dbReference>
<dbReference type="InterPro" id="IPR026564">
    <property type="entry name" value="Transcrip_reg_TACO1-like_dom3"/>
</dbReference>
<dbReference type="InterPro" id="IPR029072">
    <property type="entry name" value="YebC-like"/>
</dbReference>
<dbReference type="NCBIfam" id="NF001030">
    <property type="entry name" value="PRK00110.1"/>
    <property type="match status" value="1"/>
</dbReference>
<dbReference type="NCBIfam" id="NF009044">
    <property type="entry name" value="PRK12378.1"/>
    <property type="match status" value="1"/>
</dbReference>
<dbReference type="NCBIfam" id="TIGR01033">
    <property type="entry name" value="YebC/PmpR family DNA-binding transcriptional regulator"/>
    <property type="match status" value="1"/>
</dbReference>
<dbReference type="PANTHER" id="PTHR12532:SF6">
    <property type="entry name" value="TRANSCRIPTIONAL REGULATORY PROTEIN YEBC-RELATED"/>
    <property type="match status" value="1"/>
</dbReference>
<dbReference type="PANTHER" id="PTHR12532">
    <property type="entry name" value="TRANSLATIONAL ACTIVATOR OF CYTOCHROME C OXIDASE 1"/>
    <property type="match status" value="1"/>
</dbReference>
<dbReference type="Pfam" id="PF20772">
    <property type="entry name" value="TACO1_YebC_N"/>
    <property type="match status" value="1"/>
</dbReference>
<dbReference type="Pfam" id="PF01709">
    <property type="entry name" value="Transcrip_reg"/>
    <property type="match status" value="1"/>
</dbReference>
<dbReference type="SUPFAM" id="SSF75625">
    <property type="entry name" value="YebC-like"/>
    <property type="match status" value="1"/>
</dbReference>
<organism>
    <name type="scientific">Clostridium acetobutylicum (strain ATCC 824 / DSM 792 / JCM 1419 / IAM 19013 / LMG 5710 / NBRC 13948 / NRRL B-527 / VKM B-1787 / 2291 / W)</name>
    <dbReference type="NCBI Taxonomy" id="272562"/>
    <lineage>
        <taxon>Bacteria</taxon>
        <taxon>Bacillati</taxon>
        <taxon>Bacillota</taxon>
        <taxon>Clostridia</taxon>
        <taxon>Eubacteriales</taxon>
        <taxon>Clostridiaceae</taxon>
        <taxon>Clostridium</taxon>
    </lineage>
</organism>
<evidence type="ECO:0000255" key="1">
    <source>
        <dbReference type="HAMAP-Rule" id="MF_00693"/>
    </source>
</evidence>
<reference key="1">
    <citation type="journal article" date="2001" name="J. Bacteriol.">
        <title>Genome sequence and comparative analysis of the solvent-producing bacterium Clostridium acetobutylicum.</title>
        <authorList>
            <person name="Noelling J."/>
            <person name="Breton G."/>
            <person name="Omelchenko M.V."/>
            <person name="Makarova K.S."/>
            <person name="Zeng Q."/>
            <person name="Gibson R."/>
            <person name="Lee H.M."/>
            <person name="Dubois J."/>
            <person name="Qiu D."/>
            <person name="Hitti J."/>
            <person name="Wolf Y.I."/>
            <person name="Tatusov R.L."/>
            <person name="Sabathe F."/>
            <person name="Doucette-Stamm L.A."/>
            <person name="Soucaille P."/>
            <person name="Daly M.J."/>
            <person name="Bennett G.N."/>
            <person name="Koonin E.V."/>
            <person name="Smith D.R."/>
        </authorList>
    </citation>
    <scope>NUCLEOTIDE SEQUENCE [LARGE SCALE GENOMIC DNA]</scope>
    <source>
        <strain>ATCC 824 / DSM 792 / JCM 1419 / IAM 19013 / LMG 5710 / NBRC 13948 / NRRL B-527 / VKM B-1787 / 2291 / W</strain>
    </source>
</reference>
<accession>Q97GS1</accession>
<comment type="subcellular location">
    <subcellularLocation>
        <location evidence="1">Cytoplasm</location>
    </subcellularLocation>
</comment>
<comment type="similarity">
    <text evidence="1">Belongs to the TACO1 family.</text>
</comment>